<keyword id="KW-0244">Early protein</keyword>
<keyword id="KW-1185">Reference proteome</keyword>
<dbReference type="EMBL" id="M22812">
    <property type="protein sequence ID" value="AAA69596.1"/>
    <property type="molecule type" value="Genomic_DNA"/>
</dbReference>
<dbReference type="EMBL" id="AY243312">
    <property type="protein sequence ID" value="AAO89295.1"/>
    <property type="molecule type" value="Genomic_DNA"/>
</dbReference>
<dbReference type="PIR" id="E31829">
    <property type="entry name" value="WZVZA5"/>
</dbReference>
<dbReference type="RefSeq" id="YP_232898.1">
    <property type="nucleotide sequence ID" value="NC_006998.1"/>
</dbReference>
<dbReference type="SMR" id="P17358"/>
<dbReference type="DNASU" id="3707631"/>
<dbReference type="GeneID" id="3707631"/>
<dbReference type="KEGG" id="vg:3707631"/>
<dbReference type="Proteomes" id="UP000000344">
    <property type="component" value="Genome"/>
</dbReference>
<feature type="chain" id="PRO_0000099418" description="Uncharacterized protein 16">
    <location>
        <begin position="1"/>
        <end position="77"/>
    </location>
</feature>
<reference key="1">
    <citation type="journal article" date="1988" name="Virology">
        <title>Analysis of a large cluster of nonessential genes deleted from a vaccinia virus terminal transposition mutant.</title>
        <authorList>
            <person name="Kotwal G.J."/>
            <person name="Moss B."/>
        </authorList>
    </citation>
    <scope>NUCLEOTIDE SEQUENCE [GENOMIC DNA]</scope>
</reference>
<reference key="2">
    <citation type="submission" date="2003-02" db="EMBL/GenBank/DDBJ databases">
        <title>Sequencing of the coding region of Vaccinia-WR to an average 9-fold redundancy and an error rate of 0.16/10kb.</title>
        <authorList>
            <person name="Esposito J.J."/>
            <person name="Frace A.M."/>
            <person name="Sammons S.A."/>
            <person name="Olsen-Rasmussen M."/>
            <person name="Osborne J."/>
            <person name="Wohlhueter R."/>
        </authorList>
    </citation>
    <scope>NUCLEOTIDE SEQUENCE [GENOMIC DNA]</scope>
</reference>
<accession>P17358</accession>
<accession>Q76ZZ1</accession>
<name>V016_VACCW</name>
<protein>
    <recommendedName>
        <fullName>Uncharacterized protein 16</fullName>
    </recommendedName>
</protein>
<sequence>MLKLKDIAMALLEATGFSNINDFNIFSYMKSKNVDVDLIKVLVEHGFDLSVKCENHRSVIENYVMTMILFLKLLICS</sequence>
<gene>
    <name type="ordered locus">VACWR016</name>
</gene>
<organism>
    <name type="scientific">Vaccinia virus (strain Western Reserve)</name>
    <name type="common">VACV</name>
    <name type="synonym">Vaccinia virus (strain WR)</name>
    <dbReference type="NCBI Taxonomy" id="10254"/>
    <lineage>
        <taxon>Viruses</taxon>
        <taxon>Varidnaviria</taxon>
        <taxon>Bamfordvirae</taxon>
        <taxon>Nucleocytoviricota</taxon>
        <taxon>Pokkesviricetes</taxon>
        <taxon>Chitovirales</taxon>
        <taxon>Poxviridae</taxon>
        <taxon>Chordopoxvirinae</taxon>
        <taxon>Orthopoxvirus</taxon>
        <taxon>Vaccinia virus</taxon>
    </lineage>
</organism>
<proteinExistence type="predicted"/>
<organismHost>
    <name type="scientific">Bos taurus</name>
    <name type="common">Bovine</name>
    <dbReference type="NCBI Taxonomy" id="9913"/>
</organismHost>